<evidence type="ECO:0000255" key="1">
    <source>
        <dbReference type="HAMAP-Rule" id="MF_01456"/>
    </source>
</evidence>
<gene>
    <name evidence="1" type="primary">ndhE</name>
</gene>
<reference key="1">
    <citation type="journal article" date="2003" name="Nucleic Acids Res.">
        <title>The complete nucleotide sequence of the hornwort (Anthoceros formosae) chloroplast genome: insight into the earliest land plants.</title>
        <authorList>
            <person name="Kugita M."/>
            <person name="Kaneko A."/>
            <person name="Yamamoto Y."/>
            <person name="Takeya Y."/>
            <person name="Matsumoto T."/>
            <person name="Yoshinaga K."/>
        </authorList>
    </citation>
    <scope>NUCLEOTIDE SEQUENCE [LARGE SCALE GENOMIC DNA]</scope>
</reference>
<reference key="2">
    <citation type="journal article" date="2003" name="Nucleic Acids Res.">
        <title>RNA editing in hornwort chloroplasts makes more than half the genes functional.</title>
        <authorList>
            <person name="Kugita M."/>
            <person name="Yamamoto Y."/>
            <person name="Fujikawa T."/>
            <person name="Matsumoto T."/>
            <person name="Yoshinaga K."/>
        </authorList>
    </citation>
    <scope>NUCLEOTIDE SEQUENCE [MRNA]</scope>
    <scope>ABSENCE OF RNA EDITING</scope>
    <source>
        <tissue>Thallus</tissue>
    </source>
</reference>
<organism>
    <name type="scientific">Anthoceros angustus</name>
    <name type="common">Hornwort</name>
    <name type="synonym">Anthoceros formosae</name>
    <dbReference type="NCBI Taxonomy" id="48387"/>
    <lineage>
        <taxon>Eukaryota</taxon>
        <taxon>Viridiplantae</taxon>
        <taxon>Streptophyta</taxon>
        <taxon>Embryophyta</taxon>
        <taxon>Anthocerotophyta</taxon>
        <taxon>Anthocerotopsida</taxon>
        <taxon>Anthocerotidae</taxon>
        <taxon>Anthocerotales</taxon>
        <taxon>Anthocerotaceae</taxon>
        <taxon>Anthoceros</taxon>
    </lineage>
</organism>
<protein>
    <recommendedName>
        <fullName evidence="1">NAD(P)H-quinone oxidoreductase subunit 4L, chloroplastic</fullName>
        <ecNumber evidence="1">7.1.1.-</ecNumber>
    </recommendedName>
    <alternativeName>
        <fullName evidence="1">NAD(P)H dehydrogenase subunit 4L</fullName>
    </alternativeName>
    <alternativeName>
        <fullName evidence="1">NADH-plastoquinone oxidoreductase subunit 4L</fullName>
    </alternativeName>
</protein>
<sequence>MLEHALIAGAFSFCIGISGLITSRNMVRAPMCLESIFNAVNVNSVVSSNTLDAEEIKGEIFAIFVIAIAAAEAAIGLSIALAIYRNRKSTRVD</sequence>
<proteinExistence type="evidence at transcript level"/>
<comment type="function">
    <text evidence="1">NDH shuttles electrons from NAD(P)H:plastoquinone, via FMN and iron-sulfur (Fe-S) centers, to quinones in the photosynthetic chain and possibly in a chloroplast respiratory chain. The immediate electron acceptor for the enzyme in this species is believed to be plastoquinone. Couples the redox reaction to proton translocation, and thus conserves the redox energy in a proton gradient.</text>
</comment>
<comment type="catalytic activity">
    <reaction evidence="1">
        <text>a plastoquinone + NADH + (n+1) H(+)(in) = a plastoquinol + NAD(+) + n H(+)(out)</text>
        <dbReference type="Rhea" id="RHEA:42608"/>
        <dbReference type="Rhea" id="RHEA-COMP:9561"/>
        <dbReference type="Rhea" id="RHEA-COMP:9562"/>
        <dbReference type="ChEBI" id="CHEBI:15378"/>
        <dbReference type="ChEBI" id="CHEBI:17757"/>
        <dbReference type="ChEBI" id="CHEBI:57540"/>
        <dbReference type="ChEBI" id="CHEBI:57945"/>
        <dbReference type="ChEBI" id="CHEBI:62192"/>
    </reaction>
</comment>
<comment type="catalytic activity">
    <reaction evidence="1">
        <text>a plastoquinone + NADPH + (n+1) H(+)(in) = a plastoquinol + NADP(+) + n H(+)(out)</text>
        <dbReference type="Rhea" id="RHEA:42612"/>
        <dbReference type="Rhea" id="RHEA-COMP:9561"/>
        <dbReference type="Rhea" id="RHEA-COMP:9562"/>
        <dbReference type="ChEBI" id="CHEBI:15378"/>
        <dbReference type="ChEBI" id="CHEBI:17757"/>
        <dbReference type="ChEBI" id="CHEBI:57783"/>
        <dbReference type="ChEBI" id="CHEBI:58349"/>
        <dbReference type="ChEBI" id="CHEBI:62192"/>
    </reaction>
</comment>
<comment type="subunit">
    <text evidence="1">NDH is composed of at least 16 different subunits, 5 of which are encoded in the nucleus.</text>
</comment>
<comment type="subcellular location">
    <subcellularLocation>
        <location evidence="1">Plastid</location>
        <location evidence="1">Chloroplast thylakoid membrane</location>
        <topology evidence="1">Multi-pass membrane protein</topology>
    </subcellularLocation>
</comment>
<comment type="similarity">
    <text evidence="1">Belongs to the complex I subunit 4L family.</text>
</comment>
<geneLocation type="chloroplast"/>
<feature type="chain" id="PRO_0000118503" description="NAD(P)H-quinone oxidoreductase subunit 4L, chloroplastic">
    <location>
        <begin position="1"/>
        <end position="93"/>
    </location>
</feature>
<feature type="transmembrane region" description="Helical" evidence="1">
    <location>
        <begin position="1"/>
        <end position="21"/>
    </location>
</feature>
<feature type="transmembrane region" description="Helical" evidence="1">
    <location>
        <begin position="60"/>
        <end position="80"/>
    </location>
</feature>
<name>NU4LC_ANTAG</name>
<dbReference type="EC" id="7.1.1.-" evidence="1"/>
<dbReference type="EMBL" id="AB086179">
    <property type="protein sequence ID" value="BAC55403.1"/>
    <property type="molecule type" value="Genomic_DNA"/>
</dbReference>
<dbReference type="EMBL" id="AB087487">
    <property type="protein sequence ID" value="BAC55503.1"/>
    <property type="molecule type" value="mRNA"/>
</dbReference>
<dbReference type="RefSeq" id="NP_777466.1">
    <property type="nucleotide sequence ID" value="NC_004543.1"/>
</dbReference>
<dbReference type="SMR" id="Q85AQ3"/>
<dbReference type="GeneID" id="2553498"/>
<dbReference type="GO" id="GO:0009535">
    <property type="term" value="C:chloroplast thylakoid membrane"/>
    <property type="evidence" value="ECO:0007669"/>
    <property type="project" value="UniProtKB-SubCell"/>
</dbReference>
<dbReference type="GO" id="GO:0030964">
    <property type="term" value="C:NADH dehydrogenase complex"/>
    <property type="evidence" value="ECO:0007669"/>
    <property type="project" value="TreeGrafter"/>
</dbReference>
<dbReference type="GO" id="GO:0016655">
    <property type="term" value="F:oxidoreductase activity, acting on NAD(P)H, quinone or similar compound as acceptor"/>
    <property type="evidence" value="ECO:0007669"/>
    <property type="project" value="UniProtKB-UniRule"/>
</dbReference>
<dbReference type="GO" id="GO:0048038">
    <property type="term" value="F:quinone binding"/>
    <property type="evidence" value="ECO:0007669"/>
    <property type="project" value="UniProtKB-KW"/>
</dbReference>
<dbReference type="GO" id="GO:0042773">
    <property type="term" value="P:ATP synthesis coupled electron transport"/>
    <property type="evidence" value="ECO:0007669"/>
    <property type="project" value="InterPro"/>
</dbReference>
<dbReference type="GO" id="GO:0019684">
    <property type="term" value="P:photosynthesis, light reaction"/>
    <property type="evidence" value="ECO:0007669"/>
    <property type="project" value="UniProtKB-UniRule"/>
</dbReference>
<dbReference type="FunFam" id="1.10.287.3510:FF:000001">
    <property type="entry name" value="NADH-quinone oxidoreductase subunit K"/>
    <property type="match status" value="1"/>
</dbReference>
<dbReference type="Gene3D" id="1.10.287.3510">
    <property type="match status" value="1"/>
</dbReference>
<dbReference type="HAMAP" id="MF_01456">
    <property type="entry name" value="NDH1_NuoK"/>
    <property type="match status" value="1"/>
</dbReference>
<dbReference type="InterPro" id="IPR001133">
    <property type="entry name" value="NADH_UbQ_OxRdtase_chain4L/K"/>
</dbReference>
<dbReference type="InterPro" id="IPR039428">
    <property type="entry name" value="NUOK/Mnh_C1-like"/>
</dbReference>
<dbReference type="NCBIfam" id="NF004320">
    <property type="entry name" value="PRK05715.1-2"/>
    <property type="match status" value="1"/>
</dbReference>
<dbReference type="PANTHER" id="PTHR11434:SF16">
    <property type="entry name" value="NADH-UBIQUINONE OXIDOREDUCTASE CHAIN 4L"/>
    <property type="match status" value="1"/>
</dbReference>
<dbReference type="PANTHER" id="PTHR11434">
    <property type="entry name" value="NADH-UBIQUINONE OXIDOREDUCTASE SUBUNIT ND4L"/>
    <property type="match status" value="1"/>
</dbReference>
<dbReference type="Pfam" id="PF00420">
    <property type="entry name" value="Oxidored_q2"/>
    <property type="match status" value="1"/>
</dbReference>
<accession>Q85AQ3</accession>
<keyword id="KW-0150">Chloroplast</keyword>
<keyword id="KW-0472">Membrane</keyword>
<keyword id="KW-0520">NAD</keyword>
<keyword id="KW-0521">NADP</keyword>
<keyword id="KW-0934">Plastid</keyword>
<keyword id="KW-0618">Plastoquinone</keyword>
<keyword id="KW-0874">Quinone</keyword>
<keyword id="KW-0793">Thylakoid</keyword>
<keyword id="KW-1278">Translocase</keyword>
<keyword id="KW-0812">Transmembrane</keyword>
<keyword id="KW-1133">Transmembrane helix</keyword>
<keyword id="KW-0813">Transport</keyword>